<reference key="1">
    <citation type="journal article" date="2001" name="Genomics">
        <title>Characterization of a mouse gene (Fbxw6) that encodes a homologue of Caenorhabditis elegans SEL-10.</title>
        <authorList>
            <person name="Maruyama S."/>
            <person name="Hatakeyama S."/>
            <person name="Nakayama K."/>
            <person name="Ishida N."/>
            <person name="Kawakami K."/>
            <person name="Nakayama K."/>
        </authorList>
    </citation>
    <scope>NUCLEOTIDE SEQUENCE [GENOMIC DNA]</scope>
    <scope>TISSUE SPECIFICITY</scope>
    <scope>INTERACTION WITH SKP1 AND CUL1</scope>
    <source>
        <strain>129/Sv</strain>
    </source>
</reference>
<reference key="2">
    <citation type="submission" date="2001-10" db="EMBL/GenBank/DDBJ databases">
        <authorList>
            <person name="Ilyin G.P."/>
        </authorList>
    </citation>
    <scope>NUCLEOTIDE SEQUENCE [MRNA]</scope>
</reference>
<reference key="3">
    <citation type="journal article" date="2009" name="PLoS Biol.">
        <title>Lineage-specific biology revealed by a finished genome assembly of the mouse.</title>
        <authorList>
            <person name="Church D.M."/>
            <person name="Goodstadt L."/>
            <person name="Hillier L.W."/>
            <person name="Zody M.C."/>
            <person name="Goldstein S."/>
            <person name="She X."/>
            <person name="Bult C.J."/>
            <person name="Agarwala R."/>
            <person name="Cherry J.L."/>
            <person name="DiCuccio M."/>
            <person name="Hlavina W."/>
            <person name="Kapustin Y."/>
            <person name="Meric P."/>
            <person name="Maglott D."/>
            <person name="Birtle Z."/>
            <person name="Marques A.C."/>
            <person name="Graves T."/>
            <person name="Zhou S."/>
            <person name="Teague B."/>
            <person name="Potamousis K."/>
            <person name="Churas C."/>
            <person name="Place M."/>
            <person name="Herschleb J."/>
            <person name="Runnheim R."/>
            <person name="Forrest D."/>
            <person name="Amos-Landgraf J."/>
            <person name="Schwartz D.C."/>
            <person name="Cheng Z."/>
            <person name="Lindblad-Toh K."/>
            <person name="Eichler E.E."/>
            <person name="Ponting C.P."/>
        </authorList>
    </citation>
    <scope>NUCLEOTIDE SEQUENCE [LARGE SCALE GENOMIC DNA]</scope>
    <source>
        <strain>C57BL/6J</strain>
    </source>
</reference>
<reference key="4">
    <citation type="journal article" date="2004" name="Genome Res.">
        <title>The status, quality, and expansion of the NIH full-length cDNA project: the Mammalian Gene Collection (MGC).</title>
        <authorList>
            <consortium name="The MGC Project Team"/>
        </authorList>
    </citation>
    <scope>NUCLEOTIDE SEQUENCE [LARGE SCALE MRNA] (ISOFORM 1)</scope>
</reference>
<reference key="5">
    <citation type="journal article" date="2005" name="Science">
        <title>The transcriptional landscape of the mammalian genome.</title>
        <authorList>
            <person name="Carninci P."/>
            <person name="Kasukawa T."/>
            <person name="Katayama S."/>
            <person name="Gough J."/>
            <person name="Frith M.C."/>
            <person name="Maeda N."/>
            <person name="Oyama R."/>
            <person name="Ravasi T."/>
            <person name="Lenhard B."/>
            <person name="Wells C."/>
            <person name="Kodzius R."/>
            <person name="Shimokawa K."/>
            <person name="Bajic V.B."/>
            <person name="Brenner S.E."/>
            <person name="Batalov S."/>
            <person name="Forrest A.R."/>
            <person name="Zavolan M."/>
            <person name="Davis M.J."/>
            <person name="Wilming L.G."/>
            <person name="Aidinis V."/>
            <person name="Allen J.E."/>
            <person name="Ambesi-Impiombato A."/>
            <person name="Apweiler R."/>
            <person name="Aturaliya R.N."/>
            <person name="Bailey T.L."/>
            <person name="Bansal M."/>
            <person name="Baxter L."/>
            <person name="Beisel K.W."/>
            <person name="Bersano T."/>
            <person name="Bono H."/>
            <person name="Chalk A.M."/>
            <person name="Chiu K.P."/>
            <person name="Choudhary V."/>
            <person name="Christoffels A."/>
            <person name="Clutterbuck D.R."/>
            <person name="Crowe M.L."/>
            <person name="Dalla E."/>
            <person name="Dalrymple B.P."/>
            <person name="de Bono B."/>
            <person name="Della Gatta G."/>
            <person name="di Bernardo D."/>
            <person name="Down T."/>
            <person name="Engstrom P."/>
            <person name="Fagiolini M."/>
            <person name="Faulkner G."/>
            <person name="Fletcher C.F."/>
            <person name="Fukushima T."/>
            <person name="Furuno M."/>
            <person name="Futaki S."/>
            <person name="Gariboldi M."/>
            <person name="Georgii-Hemming P."/>
            <person name="Gingeras T.R."/>
            <person name="Gojobori T."/>
            <person name="Green R.E."/>
            <person name="Gustincich S."/>
            <person name="Harbers M."/>
            <person name="Hayashi Y."/>
            <person name="Hensch T.K."/>
            <person name="Hirokawa N."/>
            <person name="Hill D."/>
            <person name="Huminiecki L."/>
            <person name="Iacono M."/>
            <person name="Ikeo K."/>
            <person name="Iwama A."/>
            <person name="Ishikawa T."/>
            <person name="Jakt M."/>
            <person name="Kanapin A."/>
            <person name="Katoh M."/>
            <person name="Kawasawa Y."/>
            <person name="Kelso J."/>
            <person name="Kitamura H."/>
            <person name="Kitano H."/>
            <person name="Kollias G."/>
            <person name="Krishnan S.P."/>
            <person name="Kruger A."/>
            <person name="Kummerfeld S.K."/>
            <person name="Kurochkin I.V."/>
            <person name="Lareau L.F."/>
            <person name="Lazarevic D."/>
            <person name="Lipovich L."/>
            <person name="Liu J."/>
            <person name="Liuni S."/>
            <person name="McWilliam S."/>
            <person name="Madan Babu M."/>
            <person name="Madera M."/>
            <person name="Marchionni L."/>
            <person name="Matsuda H."/>
            <person name="Matsuzawa S."/>
            <person name="Miki H."/>
            <person name="Mignone F."/>
            <person name="Miyake S."/>
            <person name="Morris K."/>
            <person name="Mottagui-Tabar S."/>
            <person name="Mulder N."/>
            <person name="Nakano N."/>
            <person name="Nakauchi H."/>
            <person name="Ng P."/>
            <person name="Nilsson R."/>
            <person name="Nishiguchi S."/>
            <person name="Nishikawa S."/>
            <person name="Nori F."/>
            <person name="Ohara O."/>
            <person name="Okazaki Y."/>
            <person name="Orlando V."/>
            <person name="Pang K.C."/>
            <person name="Pavan W.J."/>
            <person name="Pavesi G."/>
            <person name="Pesole G."/>
            <person name="Petrovsky N."/>
            <person name="Piazza S."/>
            <person name="Reed J."/>
            <person name="Reid J.F."/>
            <person name="Ring B.Z."/>
            <person name="Ringwald M."/>
            <person name="Rost B."/>
            <person name="Ruan Y."/>
            <person name="Salzberg S.L."/>
            <person name="Sandelin A."/>
            <person name="Schneider C."/>
            <person name="Schoenbach C."/>
            <person name="Sekiguchi K."/>
            <person name="Semple C.A."/>
            <person name="Seno S."/>
            <person name="Sessa L."/>
            <person name="Sheng Y."/>
            <person name="Shibata Y."/>
            <person name="Shimada H."/>
            <person name="Shimada K."/>
            <person name="Silva D."/>
            <person name="Sinclair B."/>
            <person name="Sperling S."/>
            <person name="Stupka E."/>
            <person name="Sugiura K."/>
            <person name="Sultana R."/>
            <person name="Takenaka Y."/>
            <person name="Taki K."/>
            <person name="Tammoja K."/>
            <person name="Tan S.L."/>
            <person name="Tang S."/>
            <person name="Taylor M.S."/>
            <person name="Tegner J."/>
            <person name="Teichmann S.A."/>
            <person name="Ueda H.R."/>
            <person name="van Nimwegen E."/>
            <person name="Verardo R."/>
            <person name="Wei C.L."/>
            <person name="Yagi K."/>
            <person name="Yamanishi H."/>
            <person name="Zabarovsky E."/>
            <person name="Zhu S."/>
            <person name="Zimmer A."/>
            <person name="Hide W."/>
            <person name="Bult C."/>
            <person name="Grimmond S.M."/>
            <person name="Teasdale R.D."/>
            <person name="Liu E.T."/>
            <person name="Brusic V."/>
            <person name="Quackenbush J."/>
            <person name="Wahlestedt C."/>
            <person name="Mattick J.S."/>
            <person name="Hume D.A."/>
            <person name="Kai C."/>
            <person name="Sasaki D."/>
            <person name="Tomaru Y."/>
            <person name="Fukuda S."/>
            <person name="Kanamori-Katayama M."/>
            <person name="Suzuki M."/>
            <person name="Aoki J."/>
            <person name="Arakawa T."/>
            <person name="Iida J."/>
            <person name="Imamura K."/>
            <person name="Itoh M."/>
            <person name="Kato T."/>
            <person name="Kawaji H."/>
            <person name="Kawagashira N."/>
            <person name="Kawashima T."/>
            <person name="Kojima M."/>
            <person name="Kondo S."/>
            <person name="Konno H."/>
            <person name="Nakano K."/>
            <person name="Ninomiya N."/>
            <person name="Nishio T."/>
            <person name="Okada M."/>
            <person name="Plessy C."/>
            <person name="Shibata K."/>
            <person name="Shiraki T."/>
            <person name="Suzuki S."/>
            <person name="Tagami M."/>
            <person name="Waki K."/>
            <person name="Watahiki A."/>
            <person name="Okamura-Oho Y."/>
            <person name="Suzuki H."/>
            <person name="Kawai J."/>
            <person name="Hayashizaki Y."/>
        </authorList>
    </citation>
    <scope>NUCLEOTIDE SEQUENCE [LARGE SCALE MRNA] OF 386-710</scope>
    <source>
        <strain>C57BL/6J</strain>
        <tissue>Olfactory bulb</tissue>
    </source>
</reference>
<reference key="6">
    <citation type="journal article" date="2001" name="J. Biol. Chem.">
        <title>Functional interaction between SEL-10, an F-box protein, and the nuclear form of activated Notch1 receptor.</title>
        <authorList>
            <person name="Gupta-Rossi N."/>
            <person name="Le Bail O."/>
            <person name="Gonen H."/>
            <person name="Brou C."/>
            <person name="Logeat F."/>
            <person name="Six E."/>
            <person name="Ciechanover A."/>
            <person name="Israel A."/>
        </authorList>
    </citation>
    <scope>INTERACTION WITH NOTCH1 NICD</scope>
</reference>
<reference key="7">
    <citation type="journal article" date="2001" name="J. Biol. Chem.">
        <title>The Notch intracellular domain is ubiquitinated and negatively regulated by the mammalian Sel-10 homolog.</title>
        <authorList>
            <person name="Oeberg C."/>
            <person name="Li J."/>
            <person name="Pauley A."/>
            <person name="Wolf E."/>
            <person name="Gurney M."/>
            <person name="Lendahl U."/>
        </authorList>
    </citation>
    <scope>SUBCELLULAR LOCATION</scope>
    <scope>INTERACTION WITH NOTCH1 NICD</scope>
</reference>
<reference key="8">
    <citation type="journal article" date="2011" name="J. Biol. Chem.">
        <title>The Fbw7 tumor suppressor regulates nuclear factor E2-related factor 1 transcription factor turnover through proteasome-mediated proteolysis.</title>
        <authorList>
            <person name="Biswas M."/>
            <person name="Phan D."/>
            <person name="Watanabe M."/>
            <person name="Chan J.Y."/>
        </authorList>
    </citation>
    <scope>FUNCTION</scope>
    <scope>PATHWAY</scope>
    <scope>INTERACTION WITH NFE2L1</scope>
</reference>
<reference key="9">
    <citation type="journal article" date="2012" name="Mol. Cell">
        <title>Structure of a glomulin-RBX1-CUL1 complex: inhibition of a RING E3 ligase through masking of its E2-binding surface.</title>
        <authorList>
            <person name="Duda D.M."/>
            <person name="Olszewski J.L."/>
            <person name="Tron A.E."/>
            <person name="Hammel M."/>
            <person name="Lambert L.J."/>
            <person name="Waddell M.B."/>
            <person name="Mittag T."/>
            <person name="DeCaprio J.A."/>
            <person name="Schulman B.A."/>
        </authorList>
    </citation>
    <scope>FUNCTION</scope>
    <scope>PATHWAY</scope>
    <scope>UBIQUITINATION</scope>
</reference>
<reference key="10">
    <citation type="journal article" date="2016" name="Cell">
        <title>Circadian amplitude regulation via FBXW7-targeted REV-ERBalpha degradation.</title>
        <authorList>
            <person name="Zhao X."/>
            <person name="Hirota T."/>
            <person name="Han X."/>
            <person name="Cho H."/>
            <person name="Chong L.W."/>
            <person name="Lamia K."/>
            <person name="Liu S."/>
            <person name="Atkins A.R."/>
            <person name="Banayo E."/>
            <person name="Liddle C."/>
            <person name="Yu R.T."/>
            <person name="Yates J.R. III"/>
            <person name="Kay S.A."/>
            <person name="Downes M."/>
            <person name="Evans R.M."/>
        </authorList>
    </citation>
    <scope>FUNCTION</scope>
    <scope>DISRUPTION PHENOTYPE</scope>
</reference>
<reference key="11">
    <citation type="journal article" date="2017" name="Mol. Cell">
        <title>NOTCH2 Hajdu-Cheney mutations escape SCFFBW7-dependent proteolysis to promote osteoporosis.</title>
        <authorList>
            <person name="Fukushima H."/>
            <person name="Shimizu K."/>
            <person name="Watahiki A."/>
            <person name="Hoshikawa S."/>
            <person name="Kosho T."/>
            <person name="Oba D."/>
            <person name="Sakano S."/>
            <person name="Arakaki M."/>
            <person name="Yamada A."/>
            <person name="Nagashima K."/>
            <person name="Okabe K."/>
            <person name="Fukumoto S."/>
            <person name="Jimi E."/>
            <person name="Bigas A."/>
            <person name="Nakayama K.I."/>
            <person name="Nakayama K."/>
            <person name="Aoki Y."/>
            <person name="Wei W."/>
            <person name="Inuzuka H."/>
        </authorList>
    </citation>
    <scope>FUNCTION</scope>
    <scope>DISRUPTION PHENOTYPE</scope>
</reference>
<sequence length="710" mass="79848">MNQELLSVGSKRRRTGGSLRGNASSSQVDEGQMNRVVEEDPQQQARHQEEEHTARNGELVGANPRPGDQNDTQQGQVEENNNRFISVDEDSSGNQEEQEEDEEHAGEQEEEEEEEEEEEEMDQESDDFDPSDDSSREDEHTHNSNVTNCSSVSDLPAHQLSSPFYTKTTKMKRKLDHGSEVRSFSLGKKPCKVSDYTSTTGLVPCSATPTTFGDLRAANGQGQQRRRITSVQPPTGLQEWLKMFQSWSGPEKLLALDELIDSCEPTQVKHMMQVIEPQFQRDFISLLPKELALYVLSFLEPKDLLQAAQTCRYWRILAEDNLLWREKCKEEGIDEPLHIKRRKIIKPGFIHSPWKSAYIRQHRIDTNWRRGELKSPKVLKGHDDHVITCLQFCGNRIVSGSDDNTLKVWSAVTGKCLRTLVGHTGGVWSSQMRDNIIISGSTDRTLKVWNAETGECIHTLYGHTSTVRCMHLHEKRVVSGSRDATLRVWDIETGQCLHVLMGHVAAVRCVQYDGRRVVSGAYDFMVKVWDPETETCLHTLQGHTNRVYSLQFDGIHVVSGSLDTSIRVWDVETGNCIHTLTGHQSLTSGMELKDNILVSGNADSTVKIWDIKTGQCLQTLQGPSKHQSAVTCLQFNKNFVITSSDDGTVKLWDLKTGEFIRNLVTLESGGSGGVVWRIRASNTKLVCAVGSRNGTEETKLLVLDFDVDMK</sequence>
<name>FBXW7_MOUSE</name>
<protein>
    <recommendedName>
        <fullName evidence="13">F-box/WD repeat-containing protein 7</fullName>
    </recommendedName>
    <alternativeName>
        <fullName evidence="16">F-box and WD-40 domain-containing protein 7</fullName>
    </alternativeName>
    <alternativeName>
        <fullName evidence="13">F-box protein FBW7</fullName>
    </alternativeName>
    <alternativeName>
        <fullName evidence="12">F-box protein Fbxw6</fullName>
    </alternativeName>
    <alternativeName>
        <fullName evidence="12">F-box-WD40 repeat protein 6</fullName>
    </alternativeName>
    <alternativeName>
        <fullName evidence="11">SEL-10</fullName>
    </alternativeName>
</protein>
<evidence type="ECO:0000250" key="1">
    <source>
        <dbReference type="UniProtKB" id="Q969H0"/>
    </source>
</evidence>
<evidence type="ECO:0000255" key="2">
    <source>
        <dbReference type="PROSITE-ProRule" id="PRU00080"/>
    </source>
</evidence>
<evidence type="ECO:0000256" key="3">
    <source>
        <dbReference type="SAM" id="MobiDB-lite"/>
    </source>
</evidence>
<evidence type="ECO:0000269" key="4">
    <source>
    </source>
</evidence>
<evidence type="ECO:0000269" key="5">
    <source>
    </source>
</evidence>
<evidence type="ECO:0000269" key="6">
    <source>
    </source>
</evidence>
<evidence type="ECO:0000269" key="7">
    <source>
    </source>
</evidence>
<evidence type="ECO:0000269" key="8">
    <source>
    </source>
</evidence>
<evidence type="ECO:0000269" key="9">
    <source>
    </source>
</evidence>
<evidence type="ECO:0000269" key="10">
    <source>
    </source>
</evidence>
<evidence type="ECO:0000303" key="11">
    <source>
    </source>
</evidence>
<evidence type="ECO:0000303" key="12">
    <source>
    </source>
</evidence>
<evidence type="ECO:0000305" key="13"/>
<evidence type="ECO:0000312" key="14">
    <source>
        <dbReference type="EMBL" id="AAL40930.1"/>
    </source>
</evidence>
<evidence type="ECO:0000312" key="15">
    <source>
        <dbReference type="EMBL" id="AAL50052.1"/>
    </source>
</evidence>
<evidence type="ECO:0000312" key="16">
    <source>
        <dbReference type="MGI" id="MGI:1354695"/>
    </source>
</evidence>
<dbReference type="EMBL" id="AF391202">
    <property type="protein sequence ID" value="AAL40930.1"/>
    <property type="molecule type" value="Genomic_DNA"/>
</dbReference>
<dbReference type="EMBL" id="AF391193">
    <property type="protein sequence ID" value="AAL40930.1"/>
    <property type="status" value="JOINED"/>
    <property type="molecule type" value="Genomic_DNA"/>
</dbReference>
<dbReference type="EMBL" id="AF391194">
    <property type="protein sequence ID" value="AAL40930.1"/>
    <property type="status" value="JOINED"/>
    <property type="molecule type" value="Genomic_DNA"/>
</dbReference>
<dbReference type="EMBL" id="AF391195">
    <property type="protein sequence ID" value="AAL40930.1"/>
    <property type="status" value="JOINED"/>
    <property type="molecule type" value="Genomic_DNA"/>
</dbReference>
<dbReference type="EMBL" id="AF391196">
    <property type="protein sequence ID" value="AAL40930.1"/>
    <property type="status" value="JOINED"/>
    <property type="molecule type" value="Genomic_DNA"/>
</dbReference>
<dbReference type="EMBL" id="AF391197">
    <property type="protein sequence ID" value="AAL40930.1"/>
    <property type="status" value="JOINED"/>
    <property type="molecule type" value="Genomic_DNA"/>
</dbReference>
<dbReference type="EMBL" id="AF391198">
    <property type="protein sequence ID" value="AAL40930.1"/>
    <property type="status" value="JOINED"/>
    <property type="molecule type" value="Genomic_DNA"/>
</dbReference>
<dbReference type="EMBL" id="AF391199">
    <property type="protein sequence ID" value="AAL40930.1"/>
    <property type="status" value="JOINED"/>
    <property type="molecule type" value="Genomic_DNA"/>
</dbReference>
<dbReference type="EMBL" id="AF391200">
    <property type="protein sequence ID" value="AAL40930.1"/>
    <property type="status" value="JOINED"/>
    <property type="molecule type" value="Genomic_DNA"/>
</dbReference>
<dbReference type="EMBL" id="AF391201">
    <property type="protein sequence ID" value="AAL40930.1"/>
    <property type="status" value="JOINED"/>
    <property type="molecule type" value="Genomic_DNA"/>
</dbReference>
<dbReference type="EMBL" id="AF391192">
    <property type="protein sequence ID" value="AAL40928.1"/>
    <property type="molecule type" value="mRNA"/>
</dbReference>
<dbReference type="EMBL" id="AF427101">
    <property type="protein sequence ID" value="AAL50052.1"/>
    <property type="molecule type" value="mRNA"/>
</dbReference>
<dbReference type="EMBL" id="AC124496">
    <property type="status" value="NOT_ANNOTATED_CDS"/>
    <property type="molecule type" value="Genomic_DNA"/>
</dbReference>
<dbReference type="EMBL" id="AC158583">
    <property type="status" value="NOT_ANNOTATED_CDS"/>
    <property type="molecule type" value="Genomic_DNA"/>
</dbReference>
<dbReference type="EMBL" id="BC131648">
    <property type="protein sequence ID" value="AAI31649.1"/>
    <property type="molecule type" value="mRNA"/>
</dbReference>
<dbReference type="EMBL" id="AK032174">
    <property type="protein sequence ID" value="BAC27743.1"/>
    <property type="molecule type" value="mRNA"/>
</dbReference>
<dbReference type="CCDS" id="CCDS17440.1">
    <molecule id="Q8VBV4-1"/>
</dbReference>
<dbReference type="CCDS" id="CCDS50940.1">
    <molecule id="Q8VBV4-2"/>
</dbReference>
<dbReference type="RefSeq" id="NP_001171244.1">
    <molecule id="Q8VBV4-2"/>
    <property type="nucleotide sequence ID" value="NM_001177773.2"/>
</dbReference>
<dbReference type="RefSeq" id="NP_001171245.1">
    <molecule id="Q8VBV4-2"/>
    <property type="nucleotide sequence ID" value="NM_001177774.2"/>
</dbReference>
<dbReference type="RefSeq" id="NP_536353.2">
    <molecule id="Q8VBV4-1"/>
    <property type="nucleotide sequence ID" value="NM_080428.3"/>
</dbReference>
<dbReference type="RefSeq" id="XP_006501719.1">
    <property type="nucleotide sequence ID" value="XM_006501656.3"/>
</dbReference>
<dbReference type="RefSeq" id="XP_006501720.1">
    <molecule id="Q8VBV4-2"/>
    <property type="nucleotide sequence ID" value="XM_006501657.5"/>
</dbReference>
<dbReference type="SMR" id="Q8VBV4"/>
<dbReference type="BioGRID" id="206088">
    <property type="interactions" value="57"/>
</dbReference>
<dbReference type="DIP" id="DIP-61083N"/>
<dbReference type="FunCoup" id="Q8VBV4">
    <property type="interactions" value="2646"/>
</dbReference>
<dbReference type="IntAct" id="Q8VBV4">
    <property type="interactions" value="3"/>
</dbReference>
<dbReference type="MINT" id="Q8VBV4"/>
<dbReference type="STRING" id="10090.ENSMUSP00000103306"/>
<dbReference type="iPTMnet" id="Q8VBV4"/>
<dbReference type="PhosphoSitePlus" id="Q8VBV4"/>
<dbReference type="jPOST" id="Q8VBV4"/>
<dbReference type="PaxDb" id="10090-ENSMUSP00000103306"/>
<dbReference type="ProteomicsDB" id="271558">
    <molecule id="Q8VBV4-2"/>
</dbReference>
<dbReference type="ProteomicsDB" id="332538"/>
<dbReference type="Antibodypedia" id="27779">
    <property type="antibodies" value="675 antibodies from 36 providers"/>
</dbReference>
<dbReference type="DNASU" id="50754"/>
<dbReference type="Ensembl" id="ENSMUST00000029727.8">
    <molecule id="Q8VBV4-1"/>
    <property type="protein sequence ID" value="ENSMUSP00000029727.8"/>
    <property type="gene ID" value="ENSMUSG00000028086.16"/>
</dbReference>
<dbReference type="Ensembl" id="ENSMUST00000107678.8">
    <molecule id="Q8VBV4-2"/>
    <property type="protein sequence ID" value="ENSMUSP00000103305.2"/>
    <property type="gene ID" value="ENSMUSG00000028086.16"/>
</dbReference>
<dbReference type="Ensembl" id="ENSMUST00000107679.8">
    <molecule id="Q8VBV4-2"/>
    <property type="protein sequence ID" value="ENSMUSP00000103306.2"/>
    <property type="gene ID" value="ENSMUSG00000028086.16"/>
</dbReference>
<dbReference type="GeneID" id="50754"/>
<dbReference type="KEGG" id="mmu:50754"/>
<dbReference type="UCSC" id="uc008pqk.2">
    <property type="organism name" value="mouse"/>
</dbReference>
<dbReference type="UCSC" id="uc008pql.2">
    <molecule id="Q8VBV4-2"/>
    <property type="organism name" value="mouse"/>
</dbReference>
<dbReference type="AGR" id="MGI:1354695"/>
<dbReference type="CTD" id="55294"/>
<dbReference type="MGI" id="MGI:1354695">
    <property type="gene designation" value="Fbxw7"/>
</dbReference>
<dbReference type="VEuPathDB" id="HostDB:ENSMUSG00000028086"/>
<dbReference type="eggNOG" id="KOG0274">
    <property type="taxonomic scope" value="Eukaryota"/>
</dbReference>
<dbReference type="GeneTree" id="ENSGT00940000154986"/>
<dbReference type="InParanoid" id="Q8VBV4"/>
<dbReference type="OrthoDB" id="190105at2759"/>
<dbReference type="PhylomeDB" id="Q8VBV4"/>
<dbReference type="TreeFam" id="TF101074"/>
<dbReference type="Reactome" id="R-MMU-8951664">
    <property type="pathway name" value="Neddylation"/>
</dbReference>
<dbReference type="Reactome" id="R-MMU-983168">
    <property type="pathway name" value="Antigen processing: Ubiquitination &amp; Proteasome degradation"/>
</dbReference>
<dbReference type="UniPathway" id="UPA00143"/>
<dbReference type="BioGRID-ORCS" id="50754">
    <property type="hits" value="6 hits in 81 CRISPR screens"/>
</dbReference>
<dbReference type="ChiTaRS" id="Fbxw7">
    <property type="organism name" value="mouse"/>
</dbReference>
<dbReference type="PRO" id="PR:Q8VBV4"/>
<dbReference type="Proteomes" id="UP000000589">
    <property type="component" value="Chromosome 3"/>
</dbReference>
<dbReference type="RNAct" id="Q8VBV4">
    <property type="molecule type" value="protein"/>
</dbReference>
<dbReference type="Bgee" id="ENSMUSG00000028086">
    <property type="expression patterns" value="Expressed in retrosplenial region and 254 other cell types or tissues"/>
</dbReference>
<dbReference type="ExpressionAtlas" id="Q8VBV4">
    <property type="expression patterns" value="baseline and differential"/>
</dbReference>
<dbReference type="GO" id="GO:0005694">
    <property type="term" value="C:chromosome"/>
    <property type="evidence" value="ECO:0007669"/>
    <property type="project" value="UniProtKB-SubCell"/>
</dbReference>
<dbReference type="GO" id="GO:0005737">
    <property type="term" value="C:cytoplasm"/>
    <property type="evidence" value="ECO:0000304"/>
    <property type="project" value="MGI"/>
</dbReference>
<dbReference type="GO" id="GO:0005783">
    <property type="term" value="C:endoplasmic reticulum"/>
    <property type="evidence" value="ECO:0000314"/>
    <property type="project" value="MGI"/>
</dbReference>
<dbReference type="GO" id="GO:0005794">
    <property type="term" value="C:Golgi apparatus"/>
    <property type="evidence" value="ECO:0000314"/>
    <property type="project" value="MGI"/>
</dbReference>
<dbReference type="GO" id="GO:0016020">
    <property type="term" value="C:membrane"/>
    <property type="evidence" value="ECO:0000303"/>
    <property type="project" value="ParkinsonsUK-UCL"/>
</dbReference>
<dbReference type="GO" id="GO:0005739">
    <property type="term" value="C:mitochondrion"/>
    <property type="evidence" value="ECO:0000314"/>
    <property type="project" value="ParkinsonsUK-UCL"/>
</dbReference>
<dbReference type="GO" id="GO:0005730">
    <property type="term" value="C:nucleolus"/>
    <property type="evidence" value="ECO:0000314"/>
    <property type="project" value="MGI"/>
</dbReference>
<dbReference type="GO" id="GO:0005634">
    <property type="term" value="C:nucleus"/>
    <property type="evidence" value="ECO:0000314"/>
    <property type="project" value="BHF-UCL"/>
</dbReference>
<dbReference type="GO" id="GO:1990452">
    <property type="term" value="C:Parkin-FBXW7-Cul1 ubiquitin ligase complex"/>
    <property type="evidence" value="ECO:0000250"/>
    <property type="project" value="ParkinsonsUK-UCL"/>
</dbReference>
<dbReference type="GO" id="GO:0048471">
    <property type="term" value="C:perinuclear region of cytoplasm"/>
    <property type="evidence" value="ECO:0000314"/>
    <property type="project" value="BHF-UCL"/>
</dbReference>
<dbReference type="GO" id="GO:0019005">
    <property type="term" value="C:SCF ubiquitin ligase complex"/>
    <property type="evidence" value="ECO:0000250"/>
    <property type="project" value="UniProtKB"/>
</dbReference>
<dbReference type="GO" id="GO:0030332">
    <property type="term" value="F:cyclin binding"/>
    <property type="evidence" value="ECO:0000250"/>
    <property type="project" value="ParkinsonsUK-UCL"/>
</dbReference>
<dbReference type="GO" id="GO:0050816">
    <property type="term" value="F:phosphothreonine residue binding"/>
    <property type="evidence" value="ECO:0000250"/>
    <property type="project" value="UniProtKB"/>
</dbReference>
<dbReference type="GO" id="GO:0030674">
    <property type="term" value="F:protein-macromolecule adaptor activity"/>
    <property type="evidence" value="ECO:0000250"/>
    <property type="project" value="ParkinsonsUK-UCL"/>
</dbReference>
<dbReference type="GO" id="GO:0031625">
    <property type="term" value="F:ubiquitin protein ligase binding"/>
    <property type="evidence" value="ECO:0000250"/>
    <property type="project" value="ParkinsonsUK-UCL"/>
</dbReference>
<dbReference type="GO" id="GO:1990756">
    <property type="term" value="F:ubiquitin-like ligase-substrate adaptor activity"/>
    <property type="evidence" value="ECO:0000250"/>
    <property type="project" value="UniProtKB"/>
</dbReference>
<dbReference type="GO" id="GO:0097027">
    <property type="term" value="F:ubiquitin-protein transferase activator activity"/>
    <property type="evidence" value="ECO:0000250"/>
    <property type="project" value="ParkinsonsUK-UCL"/>
</dbReference>
<dbReference type="GO" id="GO:0034644">
    <property type="term" value="P:cellular response to UV"/>
    <property type="evidence" value="ECO:0000250"/>
    <property type="project" value="ParkinsonsUK-UCL"/>
</dbReference>
<dbReference type="GO" id="GO:0006974">
    <property type="term" value="P:DNA damage response"/>
    <property type="evidence" value="ECO:0000250"/>
    <property type="project" value="UniProtKB"/>
</dbReference>
<dbReference type="GO" id="GO:0006281">
    <property type="term" value="P:DNA repair"/>
    <property type="evidence" value="ECO:0007669"/>
    <property type="project" value="UniProtKB-KW"/>
</dbReference>
<dbReference type="GO" id="GO:0030324">
    <property type="term" value="P:lung development"/>
    <property type="evidence" value="ECO:0000315"/>
    <property type="project" value="MGI"/>
</dbReference>
<dbReference type="GO" id="GO:0045746">
    <property type="term" value="P:negative regulation of Notch signaling pathway"/>
    <property type="evidence" value="ECO:0000315"/>
    <property type="project" value="BHF-UCL"/>
</dbReference>
<dbReference type="GO" id="GO:2001205">
    <property type="term" value="P:negative regulation of osteoclast development"/>
    <property type="evidence" value="ECO:0000315"/>
    <property type="project" value="UniProtKB"/>
</dbReference>
<dbReference type="GO" id="GO:0007219">
    <property type="term" value="P:Notch signaling pathway"/>
    <property type="evidence" value="ECO:0000314"/>
    <property type="project" value="MGI"/>
</dbReference>
<dbReference type="GO" id="GO:0045742">
    <property type="term" value="P:positive regulation of epidermal growth factor receptor signaling pathway"/>
    <property type="evidence" value="ECO:0000314"/>
    <property type="project" value="BHF-UCL"/>
</dbReference>
<dbReference type="GO" id="GO:0070374">
    <property type="term" value="P:positive regulation of ERK1 and ERK2 cascade"/>
    <property type="evidence" value="ECO:0000315"/>
    <property type="project" value="BHF-UCL"/>
</dbReference>
<dbReference type="GO" id="GO:1903378">
    <property type="term" value="P:positive regulation of oxidative stress-induced neuron intrinsic apoptotic signaling pathway"/>
    <property type="evidence" value="ECO:0000315"/>
    <property type="project" value="ParkinsonsUK-UCL"/>
</dbReference>
<dbReference type="GO" id="GO:1901800">
    <property type="term" value="P:positive regulation of proteasomal protein catabolic process"/>
    <property type="evidence" value="ECO:0000315"/>
    <property type="project" value="ParkinsonsUK-UCL"/>
</dbReference>
<dbReference type="GO" id="GO:0031398">
    <property type="term" value="P:positive regulation of protein ubiquitination"/>
    <property type="evidence" value="ECO:0000250"/>
    <property type="project" value="ParkinsonsUK-UCL"/>
</dbReference>
<dbReference type="GO" id="GO:2000060">
    <property type="term" value="P:positive regulation of ubiquitin-dependent protein catabolic process"/>
    <property type="evidence" value="ECO:0000314"/>
    <property type="project" value="BHF-UCL"/>
</dbReference>
<dbReference type="GO" id="GO:0031648">
    <property type="term" value="P:protein destabilization"/>
    <property type="evidence" value="ECO:0000314"/>
    <property type="project" value="MGI"/>
</dbReference>
<dbReference type="GO" id="GO:0070534">
    <property type="term" value="P:protein K63-linked ubiquitination"/>
    <property type="evidence" value="ECO:0000250"/>
    <property type="project" value="UniProtKB"/>
</dbReference>
<dbReference type="GO" id="GO:0050821">
    <property type="term" value="P:protein stabilization"/>
    <property type="evidence" value="ECO:0000314"/>
    <property type="project" value="BHF-UCL"/>
</dbReference>
<dbReference type="GO" id="GO:0016567">
    <property type="term" value="P:protein ubiquitination"/>
    <property type="evidence" value="ECO:0000250"/>
    <property type="project" value="UniProtKB"/>
</dbReference>
<dbReference type="GO" id="GO:0090049">
    <property type="term" value="P:regulation of cell migration involved in sprouting angiogenesis"/>
    <property type="evidence" value="ECO:0000315"/>
    <property type="project" value="CACAO"/>
</dbReference>
<dbReference type="GO" id="GO:0042752">
    <property type="term" value="P:regulation of circadian rhythm"/>
    <property type="evidence" value="ECO:0000315"/>
    <property type="project" value="UniProtKB"/>
</dbReference>
<dbReference type="GO" id="GO:0048511">
    <property type="term" value="P:rhythmic process"/>
    <property type="evidence" value="ECO:0007669"/>
    <property type="project" value="UniProtKB-KW"/>
</dbReference>
<dbReference type="GO" id="GO:0031146">
    <property type="term" value="P:SCF-dependent proteasomal ubiquitin-dependent protein catabolic process"/>
    <property type="evidence" value="ECO:0000314"/>
    <property type="project" value="UniProtKB"/>
</dbReference>
<dbReference type="GO" id="GO:0007062">
    <property type="term" value="P:sister chromatid cohesion"/>
    <property type="evidence" value="ECO:0000250"/>
    <property type="project" value="ParkinsonsUK-UCL"/>
</dbReference>
<dbReference type="GO" id="GO:0001570">
    <property type="term" value="P:vasculogenesis"/>
    <property type="evidence" value="ECO:0000315"/>
    <property type="project" value="MGI"/>
</dbReference>
<dbReference type="CDD" id="cd22133">
    <property type="entry name" value="F-box_FBXW7"/>
    <property type="match status" value="1"/>
</dbReference>
<dbReference type="CDD" id="cd00200">
    <property type="entry name" value="WD40"/>
    <property type="match status" value="1"/>
</dbReference>
<dbReference type="FunFam" id="1.20.1280.50:FF:000004">
    <property type="entry name" value="F-box/WD repeat-containing protein 7 isoform X1"/>
    <property type="match status" value="1"/>
</dbReference>
<dbReference type="FunFam" id="2.130.10.10:FF:000032">
    <property type="entry name" value="F-box/WD repeat-containing protein 7 isoform X1"/>
    <property type="match status" value="1"/>
</dbReference>
<dbReference type="Gene3D" id="1.20.1280.50">
    <property type="match status" value="1"/>
</dbReference>
<dbReference type="Gene3D" id="2.130.10.10">
    <property type="entry name" value="YVTN repeat-like/Quinoprotein amine dehydrogenase"/>
    <property type="match status" value="1"/>
</dbReference>
<dbReference type="InterPro" id="IPR036047">
    <property type="entry name" value="F-box-like_dom_sf"/>
</dbReference>
<dbReference type="InterPro" id="IPR001810">
    <property type="entry name" value="F-box_dom"/>
</dbReference>
<dbReference type="InterPro" id="IPR020472">
    <property type="entry name" value="G-protein_beta_WD-40_rep"/>
</dbReference>
<dbReference type="InterPro" id="IPR015943">
    <property type="entry name" value="WD40/YVTN_repeat-like_dom_sf"/>
</dbReference>
<dbReference type="InterPro" id="IPR019775">
    <property type="entry name" value="WD40_repeat_CS"/>
</dbReference>
<dbReference type="InterPro" id="IPR036322">
    <property type="entry name" value="WD40_repeat_dom_sf"/>
</dbReference>
<dbReference type="InterPro" id="IPR001680">
    <property type="entry name" value="WD40_rpt"/>
</dbReference>
<dbReference type="PANTHER" id="PTHR19849:SF1">
    <property type="entry name" value="F-BOX_WD REPEAT-CONTAINING PROTEIN 7"/>
    <property type="match status" value="1"/>
</dbReference>
<dbReference type="PANTHER" id="PTHR19849">
    <property type="entry name" value="PHOSPHOLIPASE A-2-ACTIVATING PROTEIN"/>
    <property type="match status" value="1"/>
</dbReference>
<dbReference type="Pfam" id="PF12937">
    <property type="entry name" value="F-box-like"/>
    <property type="match status" value="1"/>
</dbReference>
<dbReference type="Pfam" id="PF00400">
    <property type="entry name" value="WD40"/>
    <property type="match status" value="7"/>
</dbReference>
<dbReference type="PRINTS" id="PR00320">
    <property type="entry name" value="GPROTEINBRPT"/>
</dbReference>
<dbReference type="SMART" id="SM00256">
    <property type="entry name" value="FBOX"/>
    <property type="match status" value="1"/>
</dbReference>
<dbReference type="SMART" id="SM00320">
    <property type="entry name" value="WD40"/>
    <property type="match status" value="8"/>
</dbReference>
<dbReference type="SUPFAM" id="SSF81383">
    <property type="entry name" value="F-box domain"/>
    <property type="match status" value="1"/>
</dbReference>
<dbReference type="SUPFAM" id="SSF50978">
    <property type="entry name" value="WD40 repeat-like"/>
    <property type="match status" value="1"/>
</dbReference>
<dbReference type="PROSITE" id="PS50181">
    <property type="entry name" value="FBOX"/>
    <property type="match status" value="1"/>
</dbReference>
<dbReference type="PROSITE" id="PS00678">
    <property type="entry name" value="WD_REPEATS_1"/>
    <property type="match status" value="5"/>
</dbReference>
<dbReference type="PROSITE" id="PS50082">
    <property type="entry name" value="WD_REPEATS_2"/>
    <property type="match status" value="7"/>
</dbReference>
<dbReference type="PROSITE" id="PS50294">
    <property type="entry name" value="WD_REPEATS_REGION"/>
    <property type="match status" value="1"/>
</dbReference>
<keyword id="KW-0025">Alternative splicing</keyword>
<keyword id="KW-0090">Biological rhythms</keyword>
<keyword id="KW-0158">Chromosome</keyword>
<keyword id="KW-0227">DNA damage</keyword>
<keyword id="KW-0234">DNA repair</keyword>
<keyword id="KW-0539">Nucleus</keyword>
<keyword id="KW-0597">Phosphoprotein</keyword>
<keyword id="KW-1185">Reference proteome</keyword>
<keyword id="KW-0677">Repeat</keyword>
<keyword id="KW-0832">Ubl conjugation</keyword>
<keyword id="KW-0833">Ubl conjugation pathway</keyword>
<keyword id="KW-0853">WD repeat</keyword>
<organism>
    <name type="scientific">Mus musculus</name>
    <name type="common">Mouse</name>
    <dbReference type="NCBI Taxonomy" id="10090"/>
    <lineage>
        <taxon>Eukaryota</taxon>
        <taxon>Metazoa</taxon>
        <taxon>Chordata</taxon>
        <taxon>Craniata</taxon>
        <taxon>Vertebrata</taxon>
        <taxon>Euteleostomi</taxon>
        <taxon>Mammalia</taxon>
        <taxon>Eutheria</taxon>
        <taxon>Euarchontoglires</taxon>
        <taxon>Glires</taxon>
        <taxon>Rodentia</taxon>
        <taxon>Myomorpha</taxon>
        <taxon>Muroidea</taxon>
        <taxon>Muridae</taxon>
        <taxon>Murinae</taxon>
        <taxon>Mus</taxon>
        <taxon>Mus</taxon>
    </lineage>
</organism>
<accession>Q8VBV4</accession>
<accession>A2RRI5</accession>
<accession>D3YUA5</accession>
<accession>Q8CCS5</accession>
<accession>Q8VHP4</accession>
<proteinExistence type="evidence at protein level"/>
<gene>
    <name evidence="16" type="primary">Fbxw7</name>
    <name evidence="13" type="synonym">Fbw7</name>
    <name evidence="15" type="synonym">Fbwd6</name>
    <name evidence="14" type="synonym">Fbxw6</name>
</gene>
<feature type="chain" id="PRO_0000050995" description="F-box/WD repeat-containing protein 7">
    <location>
        <begin position="1"/>
        <end position="710"/>
    </location>
</feature>
<feature type="domain" description="F-box" evidence="2">
    <location>
        <begin position="281"/>
        <end position="327"/>
    </location>
</feature>
<feature type="repeat" description="WD 1">
    <location>
        <begin position="381"/>
        <end position="421"/>
    </location>
</feature>
<feature type="repeat" description="WD 2">
    <location>
        <begin position="423"/>
        <end position="459"/>
    </location>
</feature>
<feature type="repeat" description="WD 3">
    <location>
        <begin position="462"/>
        <end position="501"/>
    </location>
</feature>
<feature type="repeat" description="WD 4">
    <location>
        <begin position="503"/>
        <end position="539"/>
    </location>
</feature>
<feature type="repeat" description="WD 5">
    <location>
        <begin position="542"/>
        <end position="581"/>
    </location>
</feature>
<feature type="repeat" description="WD 6">
    <location>
        <begin position="583"/>
        <end position="621"/>
    </location>
</feature>
<feature type="repeat" description="WD 7">
    <location>
        <begin position="625"/>
        <end position="662"/>
    </location>
</feature>
<feature type="region of interest" description="Disordered" evidence="3">
    <location>
        <begin position="1"/>
        <end position="158"/>
    </location>
</feature>
<feature type="compositionally biased region" description="Basic and acidic residues" evidence="3">
    <location>
        <begin position="46"/>
        <end position="55"/>
    </location>
</feature>
<feature type="compositionally biased region" description="Polar residues" evidence="3">
    <location>
        <begin position="69"/>
        <end position="84"/>
    </location>
</feature>
<feature type="compositionally biased region" description="Acidic residues" evidence="3">
    <location>
        <begin position="87"/>
        <end position="132"/>
    </location>
</feature>
<feature type="compositionally biased region" description="Basic and acidic residues" evidence="3">
    <location>
        <begin position="133"/>
        <end position="142"/>
    </location>
</feature>
<feature type="compositionally biased region" description="Polar residues" evidence="3">
    <location>
        <begin position="143"/>
        <end position="158"/>
    </location>
</feature>
<feature type="modified residue" description="Phosphoserine" evidence="1">
    <location>
        <position position="26"/>
    </location>
</feature>
<feature type="modified residue" description="Phosphothreonine" evidence="1">
    <location>
        <position position="208"/>
    </location>
</feature>
<feature type="modified residue" description="Phosphoserine; by SGK1" evidence="1">
    <location>
        <position position="230"/>
    </location>
</feature>
<feature type="splice variant" id="VSP_059530" description="In isoform 2.">
    <original>MNQELLSVGSKRRRTGGSLRGNASSSQVDEGQMNRVVEEDPQQQARHQEEEHTARNGELVGANPRPGDQNDTQQGQVEENNNRFISVDEDSSGNQEEQEEDEEHAGEQEEEEEEEEEEEEMDQESDDFDPSDDSSREDEHTHNSNVTNCSSVSDLPAHQLSSPFYTKTT</original>
    <variation>MRVCVPSSVLVLSCVCWCWGVLLPVPLPNLPFLACLSMSTLESVTYLPEKGLYCQRLPSSRTHGGTESLKGKNTENMGFYGTLKMIFY</variation>
    <location>
        <begin position="1"/>
        <end position="169"/>
    </location>
</feature>
<feature type="sequence conflict" description="In Ref. 2; AAL50052." evidence="13" ref="2">
    <original>Q</original>
    <variation>R</variation>
    <location>
        <position position="73"/>
    </location>
</feature>
<feature type="sequence conflict" description="In Ref. 2; AAL50052." evidence="13" ref="2">
    <original>Q</original>
    <variation>E</variation>
    <location>
        <position position="621"/>
    </location>
</feature>
<feature type="sequence conflict" description="In Ref. 2; AAL50052." evidence="13" ref="2">
    <original>L</original>
    <variation>F</variation>
    <location>
        <position position="700"/>
    </location>
</feature>
<feature type="sequence conflict" description="In Ref. 2; AAL50052." evidence="13" ref="2">
    <original>F</original>
    <variation>V</variation>
    <location>
        <position position="705"/>
    </location>
</feature>
<comment type="function">
    <text evidence="1 7 8 9 10">Substrate recognition component of a SCF (SKP1-CUL1-F-box protein) E3 ubiquitin-protein ligase complex which mediates the ubiquitination and subsequent proteasomal degradation of target proteins (PubMed:21953459, PubMed:22748924). Recognizes and binds phosphorylated sites/phosphodegrons within target proteins and thereafter brings them to the SCF complex for ubiquitination (PubMed:22748924). Mediates ubiquitination and subsequent degradation of CCNE1 and MYC (PubMed:22748924). Identified substrates include cyclin-E (CCNE1 or CCNE2), DISC1, JUN, MYC, NOTCH1 released notch intracellular domain (NICD), NOTCH2, MCL1, MLST8, RICTOR and probably PSEN1 (By similarity). Acts as a negative regulator of JNK signaling by binding to phosphorylated JUN and promoting its ubiquitination and subsequent degradation (By similarity). SCF(FBXW7) complex mediates the ubiquitination and subsequent degradation of NFE2L1 (PubMed:21953459). Involved in bone homeostasis and negative regulation of osteoclast differentiation (PubMed:29149593). Regulates the amplitude of the cyclic expression of hepatic core clock genes and genes involved in lipid and glucose metabolism via ubiquitination and proteasomal degradation of their transcriptional repressor NR1D1; CDK1-dependent phosphorylation of NR1D1 is necessary for SCF(FBXW7)-mediated ubiquitination (PubMed:27238018). Also able to promote 'Lys-63'-linked ubiquitination in response to DNA damage (By similarity). The SCF(FBXW7) complex facilitates double-strand break repair following phosphorylation by ATM: phosphorylation promotes localization to sites of double-strand breaks and 'Lys-63'-linked ubiquitination of phosphorylated XRCC4, enhancing DNA non-homologous end joining (By similarity).</text>
</comment>
<comment type="pathway">
    <text evidence="7 8">Protein modification; protein ubiquitination.</text>
</comment>
<comment type="subunit">
    <text evidence="1 4 5 6 7">Homodimer; homodimerization plays a role in substrate binding and/or ubiquitination and degradation (By similarity). Component of the SCF(FBXW7) complex consisting of CUL1, RBX1, SKP1 and FBXW7 (PubMed:11735228). Interacts (via F-box domain) with SKP1 (PubMed:11735228). Interacts (via F-box domain) with pseudophosphatase STYX; the interaction is direct and prevents FBXW7 interaction with SKP1 (By similarity). Interacts with cyclin-E (CCNE1 or CCNE2) (By similarity). Interacts with PSEN1 (By similarity). Forms a trimeric complex with NOTCH1 and SGK1 (By similarity). Interacts with NOTCH1 intracellular domain/NICD and NOTCH4 intracellular domain/NICD (PubMed:11425854, PubMed:11461910). Interacts with NOTCH2 intracellular domain (N2ICD) (By similarity). Interacts with MYC (when phosphorylated) (By similarity). Interacts with USP28, counteracting ubiquitination of MYC (By similarity). Interacts (when phosphorylated at Thr-208) with PIN1, disrupting FBXW7 dimerization and promoting FBXW7 autoubiquitination and degradation (By similarity). Interacts with UBE2QL1 (By similarity). Interacts with FAM83D; promotes FBXW7 degradation (By similarity). Interacts with MYCN; FBXW7 competes with AURKA for binding to unphosphorylated MYCN but not for binding to phosphorylated MYCN (By similarity). Interacts with JUN (By similarity). Found in a complex with JUN and PRR7 (By similarity). Interacts with JUN and PRR7; the interaction inhibits ubiquitination-mediated JUN degradation, promoting its phosphorylation and transcriptional activity (By similarity). Interacts with NFE2L1 (PubMed:21953459). Interacts with NR1D1 (By similarity). Interacts with RICTOR; mediates RICTOR ubiquitination and degradation (By similarity). Interacts with USP38, counteracting ubiquitination of MYC (By similarity).</text>
</comment>
<comment type="subcellular location">
    <subcellularLocation>
        <location evidence="5">Nucleus</location>
        <location evidence="5">Nucleoplasm</location>
    </subcellularLocation>
    <subcellularLocation>
        <location evidence="1">Chromosome</location>
    </subcellularLocation>
    <text evidence="1">Localizes to site of double-strand breaks following phosphorylation by ATM.</text>
</comment>
<comment type="alternative products">
    <event type="alternative splicing"/>
    <isoform>
        <id>Q8VBV4-2</id>
        <name>1</name>
        <sequence type="displayed"/>
    </isoform>
    <isoform>
        <id>Q8VBV4-1</id>
        <name>2</name>
        <sequence type="described" ref="VSP_059530"/>
    </isoform>
</comment>
<comment type="tissue specificity">
    <text evidence="6">Widely expressed with highest levels in brain, heart and testis.</text>
</comment>
<comment type="domain">
    <text evidence="1">The WD repeats mediate interaction with substrates of the SCF (SKP1-CUL1-F-box protein) E3 ubiquitin-protein ligase complex.</text>
</comment>
<comment type="domain">
    <text evidence="1">The F-box domain mediates interaction with SKP1.</text>
</comment>
<comment type="PTM">
    <text evidence="1">Phosphorylation at Thr-208 promotes interaction with PIN1, leading to disrupt FBXW7 dimerization and promoting FBXW7 autoubiquitination and degradation. Phosphorylated by ATM at Ser-26 in response to DNA damage, promoting recruitment to DNA damage sites and 'Lys-63'-linked ubiquitination of phosphorylated XRCC4.</text>
</comment>
<comment type="PTM">
    <text evidence="1 8">Ubiquitinated: autoubiquitinates following phosphorylation at Thr-208 and subsequent interaction with PIN1 (By similarity). Ubiquitination leads to its proteasomal degradation (PubMed:22748924).</text>
</comment>
<comment type="disruption phenotype">
    <text evidence="9 10">Whole body FBW7 knockout is embryonic lethal. Conditional knockout mice in which FBW7 expression is specifically abolished in osteoclasts display severe bone resorption, bone fragility and low bone mass (PubMed:29149593). Conditional knockout in liver reduces the amplitude of the diurnal expression of many core clock genes and the altered expression of a large number of genes controlling liver metabolic pathways (PubMed:27238018).</text>
</comment>